<proteinExistence type="evidence at transcript level"/>
<sequence>MKMKRTASSNSEAQSYNESPHSPLRFHSPLSDAGDLPESRYVSPEGSPFKIENPKSIVAGNKLTQFSPLPSPIPPPPPQFPPPRRQRNARVPMNSSSDKSPSSMVVHNSWVREDGGQTTTRKAGAPINGEESTRTTVNRARGDDLVSLTALGFRITEVILCVISFSIMAADKTQGWSGDSYDRYKEYRYCLAVNVIAFVYSAFEACDAACYIAKESYMINCGFHDLFVFSMDQLLAYLLMSASSCAATRVDDWVSNWGKDEFTQMATASIAVSFLAFGAFAVSALISSYRLFTHASS</sequence>
<keyword id="KW-1003">Cell membrane</keyword>
<keyword id="KW-0472">Membrane</keyword>
<keyword id="KW-1185">Reference proteome</keyword>
<keyword id="KW-0812">Transmembrane</keyword>
<keyword id="KW-1133">Transmembrane helix</keyword>
<dbReference type="EMBL" id="AB009053">
    <property type="protein sequence ID" value="BAB10851.1"/>
    <property type="status" value="ALT_SEQ"/>
    <property type="molecule type" value="Genomic_DNA"/>
</dbReference>
<dbReference type="EMBL" id="CP002688">
    <property type="protein sequence ID" value="AED97661.1"/>
    <property type="molecule type" value="Genomic_DNA"/>
</dbReference>
<dbReference type="EMBL" id="BT022001">
    <property type="protein sequence ID" value="AAY25413.1"/>
    <property type="molecule type" value="mRNA"/>
</dbReference>
<dbReference type="EMBL" id="BT023479">
    <property type="protein sequence ID" value="AAY57318.1"/>
    <property type="molecule type" value="mRNA"/>
</dbReference>
<dbReference type="RefSeq" id="NP_201088.1">
    <property type="nucleotide sequence ID" value="NM_125677.4"/>
</dbReference>
<dbReference type="SMR" id="Q501G6"/>
<dbReference type="iPTMnet" id="Q501G6"/>
<dbReference type="PaxDb" id="3702-AT5G62820.1"/>
<dbReference type="ProteomicsDB" id="222691"/>
<dbReference type="EnsemblPlants" id="AT5G62820.1">
    <property type="protein sequence ID" value="AT5G62820.1"/>
    <property type="gene ID" value="AT5G62820"/>
</dbReference>
<dbReference type="GeneID" id="836403"/>
<dbReference type="Gramene" id="AT5G62820.1">
    <property type="protein sequence ID" value="AT5G62820.1"/>
    <property type="gene ID" value="AT5G62820"/>
</dbReference>
<dbReference type="KEGG" id="ath:AT5G62820"/>
<dbReference type="Araport" id="AT5G62820"/>
<dbReference type="TAIR" id="AT5G62820">
    <property type="gene designation" value="CASPL4A2"/>
</dbReference>
<dbReference type="eggNOG" id="ENOG502QW75">
    <property type="taxonomic scope" value="Eukaryota"/>
</dbReference>
<dbReference type="HOGENOM" id="CLU_048961_2_0_1"/>
<dbReference type="InParanoid" id="Q501G6"/>
<dbReference type="OMA" id="ITEVILC"/>
<dbReference type="OrthoDB" id="672180at2759"/>
<dbReference type="PhylomeDB" id="Q501G6"/>
<dbReference type="PRO" id="PR:Q501G6"/>
<dbReference type="Proteomes" id="UP000006548">
    <property type="component" value="Chromosome 5"/>
</dbReference>
<dbReference type="ExpressionAtlas" id="Q501G6">
    <property type="expression patterns" value="baseline and differential"/>
</dbReference>
<dbReference type="GO" id="GO:0005886">
    <property type="term" value="C:plasma membrane"/>
    <property type="evidence" value="ECO:0007669"/>
    <property type="project" value="UniProtKB-SubCell"/>
</dbReference>
<dbReference type="InterPro" id="IPR006702">
    <property type="entry name" value="CASP_dom"/>
</dbReference>
<dbReference type="PANTHER" id="PTHR33573:SF61">
    <property type="entry name" value="CASP-LIKE PROTEIN 4A2"/>
    <property type="match status" value="1"/>
</dbReference>
<dbReference type="PANTHER" id="PTHR33573">
    <property type="entry name" value="CASP-LIKE PROTEIN 4A4"/>
    <property type="match status" value="1"/>
</dbReference>
<dbReference type="Pfam" id="PF04535">
    <property type="entry name" value="CASP_dom"/>
    <property type="match status" value="1"/>
</dbReference>
<comment type="subunit">
    <text evidence="1">Homodimer and heterodimers.</text>
</comment>
<comment type="subcellular location">
    <subcellularLocation>
        <location evidence="1">Cell membrane</location>
        <topology evidence="1">Multi-pass membrane protein</topology>
    </subcellularLocation>
</comment>
<comment type="similarity">
    <text evidence="4">Belongs to the Casparian strip membrane proteins (CASP) family.</text>
</comment>
<comment type="sequence caution" evidence="4">
    <conflict type="erroneous gene model prediction">
        <sequence resource="EMBL-CDS" id="BAB10851"/>
    </conflict>
</comment>
<evidence type="ECO:0000250" key="1"/>
<evidence type="ECO:0000255" key="2"/>
<evidence type="ECO:0000256" key="3">
    <source>
        <dbReference type="SAM" id="MobiDB-lite"/>
    </source>
</evidence>
<evidence type="ECO:0000305" key="4"/>
<gene>
    <name type="ordered locus">At5g62820</name>
    <name type="ORF">MQB2.14</name>
</gene>
<protein>
    <recommendedName>
        <fullName>CASP-like protein 4A2</fullName>
        <shortName>AtCASPL4A2</shortName>
    </recommendedName>
</protein>
<accession>Q501G6</accession>
<accession>Q9FM13</accession>
<organism>
    <name type="scientific">Arabidopsis thaliana</name>
    <name type="common">Mouse-ear cress</name>
    <dbReference type="NCBI Taxonomy" id="3702"/>
    <lineage>
        <taxon>Eukaryota</taxon>
        <taxon>Viridiplantae</taxon>
        <taxon>Streptophyta</taxon>
        <taxon>Embryophyta</taxon>
        <taxon>Tracheophyta</taxon>
        <taxon>Spermatophyta</taxon>
        <taxon>Magnoliopsida</taxon>
        <taxon>eudicotyledons</taxon>
        <taxon>Gunneridae</taxon>
        <taxon>Pentapetalae</taxon>
        <taxon>rosids</taxon>
        <taxon>malvids</taxon>
        <taxon>Brassicales</taxon>
        <taxon>Brassicaceae</taxon>
        <taxon>Camelineae</taxon>
        <taxon>Arabidopsis</taxon>
    </lineage>
</organism>
<name>CSPLY_ARATH</name>
<feature type="chain" id="PRO_0000308689" description="CASP-like protein 4A2">
    <location>
        <begin position="1"/>
        <end position="297"/>
    </location>
</feature>
<feature type="topological domain" description="Cytoplasmic" evidence="2">
    <location>
        <begin position="1"/>
        <end position="149"/>
    </location>
</feature>
<feature type="transmembrane region" description="Helical" evidence="2">
    <location>
        <begin position="150"/>
        <end position="170"/>
    </location>
</feature>
<feature type="topological domain" description="Extracellular" evidence="2">
    <location>
        <begin position="171"/>
        <end position="191"/>
    </location>
</feature>
<feature type="transmembrane region" description="Helical" evidence="2">
    <location>
        <begin position="192"/>
        <end position="212"/>
    </location>
</feature>
<feature type="topological domain" description="Cytoplasmic" evidence="2">
    <location>
        <begin position="213"/>
        <end position="225"/>
    </location>
</feature>
<feature type="transmembrane region" description="Helical" evidence="2">
    <location>
        <begin position="226"/>
        <end position="246"/>
    </location>
</feature>
<feature type="topological domain" description="Extracellular" evidence="2">
    <location>
        <begin position="247"/>
        <end position="265"/>
    </location>
</feature>
<feature type="transmembrane region" description="Helical" evidence="2">
    <location>
        <begin position="266"/>
        <end position="286"/>
    </location>
</feature>
<feature type="topological domain" description="Cytoplasmic" evidence="2">
    <location>
        <begin position="287"/>
        <end position="297"/>
    </location>
</feature>
<feature type="region of interest" description="Disordered" evidence="3">
    <location>
        <begin position="1"/>
        <end position="135"/>
    </location>
</feature>
<feature type="compositionally biased region" description="Polar residues" evidence="3">
    <location>
        <begin position="1"/>
        <end position="20"/>
    </location>
</feature>
<feature type="compositionally biased region" description="Pro residues" evidence="3">
    <location>
        <begin position="69"/>
        <end position="83"/>
    </location>
</feature>
<reference key="1">
    <citation type="journal article" date="1998" name="DNA Res.">
        <title>Structural analysis of Arabidopsis thaliana chromosome 5. IV. Sequence features of the regions of 1,456,315 bp covered by nineteen physically assigned P1 and TAC clones.</title>
        <authorList>
            <person name="Sato S."/>
            <person name="Kaneko T."/>
            <person name="Kotani H."/>
            <person name="Nakamura Y."/>
            <person name="Asamizu E."/>
            <person name="Miyajima N."/>
            <person name="Tabata S."/>
        </authorList>
    </citation>
    <scope>NUCLEOTIDE SEQUENCE [LARGE SCALE GENOMIC DNA]</scope>
    <source>
        <strain>cv. Columbia</strain>
    </source>
</reference>
<reference key="2">
    <citation type="journal article" date="2017" name="Plant J.">
        <title>Araport11: a complete reannotation of the Arabidopsis thaliana reference genome.</title>
        <authorList>
            <person name="Cheng C.Y."/>
            <person name="Krishnakumar V."/>
            <person name="Chan A.P."/>
            <person name="Thibaud-Nissen F."/>
            <person name="Schobel S."/>
            <person name="Town C.D."/>
        </authorList>
    </citation>
    <scope>GENOME REANNOTATION</scope>
    <source>
        <strain>cv. Columbia</strain>
    </source>
</reference>
<reference key="3">
    <citation type="submission" date="2005-06" db="EMBL/GenBank/DDBJ databases">
        <title>Arabidopsis ORF clones.</title>
        <authorList>
            <person name="Kim C.J."/>
            <person name="Chen H."/>
            <person name="Cheuk R.F."/>
            <person name="Shinn P."/>
            <person name="Ecker J.R."/>
        </authorList>
    </citation>
    <scope>NUCLEOTIDE SEQUENCE [LARGE SCALE MRNA]</scope>
    <source>
        <strain>cv. Columbia</strain>
    </source>
</reference>
<reference key="4">
    <citation type="journal article" date="2014" name="Plant Physiol.">
        <title>Functional and evolutionary analysis of the CASPARIAN STRIP MEMBRANE DOMAIN PROTEIN family.</title>
        <authorList>
            <person name="Roppolo D."/>
            <person name="Boeckmann B."/>
            <person name="Pfister A."/>
            <person name="Boutet E."/>
            <person name="Rubio M.C."/>
            <person name="Denervaud-Tendon V."/>
            <person name="Vermeer J.E."/>
            <person name="Gheyselinck J."/>
            <person name="Xenarios I."/>
            <person name="Geldner N."/>
        </authorList>
    </citation>
    <scope>GENE FAMILY</scope>
    <scope>NOMENCLATURE</scope>
</reference>